<comment type="function">
    <text evidence="2">Lipid transfer protein required for autophagosome completion and peroxisome degradation. Tethers the edge of the isolation membrane (IM) to the endoplasmic reticulum (ER) and mediates direct lipid transfer from ER to IM for IM expansion. ATG2 binds to the ER exit site (ERES), which is the membrane source for autophagosome formation, using basic residues in its N-terminal region (NR) and to the expanding edge of the IM through its C-terminal region. The latter binding is assisted by an ATG18-PtdIns3P interaction. ATG2 then extracts phospholipids from the membrane source using its NR and transfers them to ATG9 to the IM through its predicted beta-sheet-rich structure for membrane expansion.</text>
</comment>
<comment type="catalytic activity">
    <reaction evidence="1">
        <text>a 1,2-diacyl-sn-glycero-3-phosphocholine(in) = a 1,2-diacyl-sn-glycero-3-phosphocholine(out)</text>
        <dbReference type="Rhea" id="RHEA:38571"/>
        <dbReference type="ChEBI" id="CHEBI:57643"/>
    </reaction>
</comment>
<comment type="catalytic activity">
    <reaction evidence="1">
        <text>a 1,2-diacyl-sn-glycero-3-phospho-L-serine(in) = a 1,2-diacyl-sn-glycero-3-phospho-L-serine(out)</text>
        <dbReference type="Rhea" id="RHEA:38663"/>
        <dbReference type="ChEBI" id="CHEBI:57262"/>
    </reaction>
</comment>
<comment type="catalytic activity">
    <reaction evidence="1">
        <text>a 1,2-diacyl-sn-glycero-3-phosphoethanolamine(in) = a 1,2-diacyl-sn-glycero-3-phosphoethanolamine(out)</text>
        <dbReference type="Rhea" id="RHEA:38895"/>
        <dbReference type="ChEBI" id="CHEBI:64612"/>
    </reaction>
</comment>
<comment type="subcellular location">
    <subcellularLocation>
        <location evidence="2">Preautophagosomal structure membrane</location>
        <topology evidence="2">Peripheral membrane protein</topology>
    </subcellularLocation>
    <subcellularLocation>
        <location evidence="2">Endoplasmic reticulum membrane</location>
        <topology evidence="2">Peripheral membrane protein</topology>
    </subcellularLocation>
</comment>
<comment type="similarity">
    <text evidence="5">Belongs to the ATG2 family.</text>
</comment>
<keyword id="KW-0072">Autophagy</keyword>
<keyword id="KW-0256">Endoplasmic reticulum</keyword>
<keyword id="KW-0445">Lipid transport</keyword>
<keyword id="KW-0472">Membrane</keyword>
<keyword id="KW-0653">Protein transport</keyword>
<keyword id="KW-1185">Reference proteome</keyword>
<keyword id="KW-0813">Transport</keyword>
<sequence length="1958" mass="215295">MFSLPSFLTTFSFTLPSLPSISLPANIQRRFLSYVLKRTLGRFVSHQALDAERIQAQVSEGWVEIENLEIECSEINNYIPPPLPLSLTSGTINKLTAKLPFPNLWSDPLQVSLDTLTLDFTLSSPSPLSRGRAATRPEHHDLAESVTSAADDFLHHELDAYEEKELEGSIRQSLILSQTDPFISDVPGGFPLGSPGEISPGRPLPANMESTTVLAGMVERILARLEFRVEKIKIRLVIEDEEDVVELTVGRIRYADESEAQTNDDGKSTTRAIRISNISLDIVPSQRKPPSLVIPQRQSLEPSVSSSTSTASTSSGNDYSDMFMSQAVVDLRQSLLTPEQISEPANEQTVHESNMFYSALSQPNESEPGASTGIKRSGISQNPKLADEIEEERSRSETPTPETKPQPSGIPVLSFGQEDVVLHMRTTRPLISAGHQTSFNDNKPTVEMNITIGTITTVLLPSHLKLFISALQTLQALCQKDDVPAAKDKPAQSTSPQTRLTATTKLKAFYVSLVYDLSAETSLNLHSTMASHLTRPTNPIPYPHLRFRLDTLVASYQSPGHSNPSRPAFTRPTPNMSTANLRRKSSGHARFGSLPSNLTVNVGDISLFEWMGEGMIAPVILFDPGLKHQYDLPSAPPHKGQAGFPECECRDWREEKKTGSEKAWRVRPRGRGILKGGARATTEDEGPVVHVRQDLGSDSAAVINLQSLHVFVDLSLIERLLPLLRSVTPLIHPPEPTPAWLQSVPSQSISEEITPESIISSLSAPPPTARGKKMKADIRCDLVRLSVRCPAPPPEPAERQIGDGRQLRSGIVFVDVHGLKSRFMDTSRTGTRPASSEVANVEFEQTLIFFASVSQHYAYPFLIFAPLSPEPGEEDIPLLPSISLSSFPQASSLPASSIAKTTLVTCKMPAIRASVHHPTVTGLQYFADDVTRWLDVAFADGSAKPRDELKMIGSRFFGGSKGSEASSEIDEPYDVEEVAAGMKVEIEISEIDMGLYVPRLDASGERVFSFKANDLGVRMETHPEENETALELSIMDLDFSDVSSTPLRILGRTTPFTLTSHQAPVVYLRFVSSTDLRTTLKESNISVALSHFTFAVHKEIAWLHEIAQFAKPPKGVFENLSPTDLTRLSINLSSASFLLVPPNLPGSIVILVREVEGKTEIPKGATDSVLEVGMSGLGALAVEGESGPLEVSSDLADVWKKAGYAQLAEVMVLELRLMRELVAAGEVSLDITQAQFKVTACADSLATFAEIATDFGRLFPNKKEEHVKLPSMGQSINVFDSLDENAFNLLPEIVSHSDTDMIEDDLPHNLDYLDHATRISKHYPSMDRTTGENLRAWHTPEEGLEEGEWENGESGETIRAFGGEIEEEEGYWEGLPILNDVYSADQKPGKIHIRVLDASLKIFLHDGYDWPRTRKAIEDEVRAVRRRLERIRQLLASGQKADESIENATSSVLFNSIYIGLEQKGEMGLSTMGMGKMDEKALMAAIDEELDGMETESGSSWQTLPAGVGAGPSAVHQAHKKTRLKGKRLVRSKKAQIEITLSGIKTDVDLYPTEESTSSRVHFTAKEMEILDHIKTSTWKKFLTEMKADNRGNIRETDADMLRIELVGVRLKEDEEELRLRAKILPLRLHVDQDALDFLKRFFSFKAPPMTSARPLAQHTTSSTPDLYFQHVEIFPIQLKLDYKPKRVDFRALREGKTIELMNFFHFEGAEMTLRHITLSGITGLERLGTTLQDLWTPDVKANQLADVISGVSPIRSMVNVGSGVADLILLPIEQYRKDGRIAKGVQRGTNSFVKSTALEVMKLGARLATGTQVILERAEGVLGGKSGEDVVGQVQGLSTNAFGVDSGMLEGGSSSEDEQEAISRYADQPESMKEGVQAAYKSLSKNVNAAAQTILAVPMEVYERSGDDGPLKAVIRAVPIAVLKPMIGTTEAVSKTLLGMRNSLDPSARRELDDKYK</sequence>
<evidence type="ECO:0000250" key="1">
    <source>
        <dbReference type="UniProtKB" id="O94649"/>
    </source>
</evidence>
<evidence type="ECO:0000250" key="2">
    <source>
        <dbReference type="UniProtKB" id="P53855"/>
    </source>
</evidence>
<evidence type="ECO:0000255" key="3"/>
<evidence type="ECO:0000256" key="4">
    <source>
        <dbReference type="SAM" id="MobiDB-lite"/>
    </source>
</evidence>
<evidence type="ECO:0000305" key="5"/>
<organism>
    <name type="scientific">Cryptococcus neoformans var. neoformans serotype D (strain JEC21 / ATCC MYA-565)</name>
    <name type="common">Filobasidiella neoformans</name>
    <dbReference type="NCBI Taxonomy" id="214684"/>
    <lineage>
        <taxon>Eukaryota</taxon>
        <taxon>Fungi</taxon>
        <taxon>Dikarya</taxon>
        <taxon>Basidiomycota</taxon>
        <taxon>Agaricomycotina</taxon>
        <taxon>Tremellomycetes</taxon>
        <taxon>Tremellales</taxon>
        <taxon>Cryptococcaceae</taxon>
        <taxon>Cryptococcus</taxon>
        <taxon>Cryptococcus neoformans species complex</taxon>
    </lineage>
</organism>
<protein>
    <recommendedName>
        <fullName>Autophagy-related protein 2</fullName>
    </recommendedName>
</protein>
<name>ATG2_CRYNJ</name>
<proteinExistence type="inferred from homology"/>
<reference key="1">
    <citation type="journal article" date="2005" name="Science">
        <title>The genome of the basidiomycetous yeast and human pathogen Cryptococcus neoformans.</title>
        <authorList>
            <person name="Loftus B.J."/>
            <person name="Fung E."/>
            <person name="Roncaglia P."/>
            <person name="Rowley D."/>
            <person name="Amedeo P."/>
            <person name="Bruno D."/>
            <person name="Vamathevan J."/>
            <person name="Miranda M."/>
            <person name="Anderson I.J."/>
            <person name="Fraser J.A."/>
            <person name="Allen J.E."/>
            <person name="Bosdet I.E."/>
            <person name="Brent M.R."/>
            <person name="Chiu R."/>
            <person name="Doering T.L."/>
            <person name="Donlin M.J."/>
            <person name="D'Souza C.A."/>
            <person name="Fox D.S."/>
            <person name="Grinberg V."/>
            <person name="Fu J."/>
            <person name="Fukushima M."/>
            <person name="Haas B.J."/>
            <person name="Huang J.C."/>
            <person name="Janbon G."/>
            <person name="Jones S.J.M."/>
            <person name="Koo H.L."/>
            <person name="Krzywinski M.I."/>
            <person name="Kwon-Chung K.J."/>
            <person name="Lengeler K.B."/>
            <person name="Maiti R."/>
            <person name="Marra M.A."/>
            <person name="Marra R.E."/>
            <person name="Mathewson C.A."/>
            <person name="Mitchell T.G."/>
            <person name="Pertea M."/>
            <person name="Riggs F.R."/>
            <person name="Salzberg S.L."/>
            <person name="Schein J.E."/>
            <person name="Shvartsbeyn A."/>
            <person name="Shin H."/>
            <person name="Shumway M."/>
            <person name="Specht C.A."/>
            <person name="Suh B.B."/>
            <person name="Tenney A."/>
            <person name="Utterback T.R."/>
            <person name="Wickes B.L."/>
            <person name="Wortman J.R."/>
            <person name="Wye N.H."/>
            <person name="Kronstad J.W."/>
            <person name="Lodge J.K."/>
            <person name="Heitman J."/>
            <person name="Davis R.W."/>
            <person name="Fraser C.M."/>
            <person name="Hyman R.W."/>
        </authorList>
    </citation>
    <scope>NUCLEOTIDE SEQUENCE [LARGE SCALE GENOMIC DNA]</scope>
    <source>
        <strain>JEC21 / ATCC MYA-565</strain>
    </source>
</reference>
<gene>
    <name type="primary">ATG2</name>
    <name type="ordered locus">CNB00700</name>
</gene>
<feature type="chain" id="PRO_0000215829" description="Autophagy-related protein 2">
    <location>
        <begin position="1"/>
        <end position="1958"/>
    </location>
</feature>
<feature type="domain" description="Chorein N-terminal" evidence="3">
    <location>
        <begin position="30"/>
        <end position="121"/>
    </location>
</feature>
<feature type="region of interest" description="Disordered" evidence="4">
    <location>
        <begin position="286"/>
        <end position="319"/>
    </location>
</feature>
<feature type="region of interest" description="Disordered" evidence="4">
    <location>
        <begin position="360"/>
        <end position="412"/>
    </location>
</feature>
<feature type="compositionally biased region" description="Low complexity" evidence="4">
    <location>
        <begin position="303"/>
        <end position="315"/>
    </location>
</feature>
<feature type="compositionally biased region" description="Polar residues" evidence="4">
    <location>
        <begin position="397"/>
        <end position="406"/>
    </location>
</feature>
<dbReference type="EMBL" id="AE017342">
    <property type="protein sequence ID" value="AAW41772.2"/>
    <property type="molecule type" value="Genomic_DNA"/>
</dbReference>
<dbReference type="RefSeq" id="XP_569079.1">
    <property type="nucleotide sequence ID" value="XM_569079.1"/>
</dbReference>
<dbReference type="SMR" id="P0CM30"/>
<dbReference type="STRING" id="214684.P0CM30"/>
<dbReference type="PaxDb" id="214684-P0CM30"/>
<dbReference type="eggNOG" id="KOG2993">
    <property type="taxonomic scope" value="Eukaryota"/>
</dbReference>
<dbReference type="HOGENOM" id="CLU_000795_0_0_1"/>
<dbReference type="InParanoid" id="P0CM30"/>
<dbReference type="Proteomes" id="UP000002149">
    <property type="component" value="Chromosome 2"/>
</dbReference>
<dbReference type="GO" id="GO:0005789">
    <property type="term" value="C:endoplasmic reticulum membrane"/>
    <property type="evidence" value="ECO:0007669"/>
    <property type="project" value="UniProtKB-SubCell"/>
</dbReference>
<dbReference type="GO" id="GO:0061908">
    <property type="term" value="C:phagophore"/>
    <property type="evidence" value="ECO:0000318"/>
    <property type="project" value="GO_Central"/>
</dbReference>
<dbReference type="GO" id="GO:0000407">
    <property type="term" value="C:phagophore assembly site"/>
    <property type="evidence" value="ECO:0000318"/>
    <property type="project" value="GO_Central"/>
</dbReference>
<dbReference type="GO" id="GO:0034045">
    <property type="term" value="C:phagophore assembly site membrane"/>
    <property type="evidence" value="ECO:0007669"/>
    <property type="project" value="UniProtKB-SubCell"/>
</dbReference>
<dbReference type="GO" id="GO:0032266">
    <property type="term" value="F:phosphatidylinositol-3-phosphate binding"/>
    <property type="evidence" value="ECO:0000318"/>
    <property type="project" value="GO_Central"/>
</dbReference>
<dbReference type="GO" id="GO:0043495">
    <property type="term" value="F:protein-membrane adaptor activity"/>
    <property type="evidence" value="ECO:0000318"/>
    <property type="project" value="GO_Central"/>
</dbReference>
<dbReference type="GO" id="GO:0000045">
    <property type="term" value="P:autophagosome assembly"/>
    <property type="evidence" value="ECO:0000318"/>
    <property type="project" value="GO_Central"/>
</dbReference>
<dbReference type="GO" id="GO:0000422">
    <property type="term" value="P:autophagy of mitochondrion"/>
    <property type="evidence" value="ECO:0000318"/>
    <property type="project" value="GO_Central"/>
</dbReference>
<dbReference type="GO" id="GO:0061723">
    <property type="term" value="P:glycophagy"/>
    <property type="evidence" value="ECO:0000318"/>
    <property type="project" value="GO_Central"/>
</dbReference>
<dbReference type="GO" id="GO:0006869">
    <property type="term" value="P:lipid transport"/>
    <property type="evidence" value="ECO:0007669"/>
    <property type="project" value="UniProtKB-KW"/>
</dbReference>
<dbReference type="GO" id="GO:0000425">
    <property type="term" value="P:pexophagy"/>
    <property type="evidence" value="ECO:0000318"/>
    <property type="project" value="GO_Central"/>
</dbReference>
<dbReference type="GO" id="GO:0034727">
    <property type="term" value="P:piecemeal microautophagy of the nucleus"/>
    <property type="evidence" value="ECO:0000318"/>
    <property type="project" value="GO_Central"/>
</dbReference>
<dbReference type="GO" id="GO:0015031">
    <property type="term" value="P:protein transport"/>
    <property type="evidence" value="ECO:0007669"/>
    <property type="project" value="UniProtKB-KW"/>
</dbReference>
<dbReference type="GO" id="GO:0061709">
    <property type="term" value="P:reticulophagy"/>
    <property type="evidence" value="ECO:0000318"/>
    <property type="project" value="GO_Central"/>
</dbReference>
<dbReference type="InterPro" id="IPR026849">
    <property type="entry name" value="ATG2"/>
</dbReference>
<dbReference type="PANTHER" id="PTHR13190">
    <property type="entry name" value="AUTOPHAGY-RELATED 2, ISOFORM A"/>
    <property type="match status" value="1"/>
</dbReference>
<dbReference type="PANTHER" id="PTHR13190:SF1">
    <property type="entry name" value="AUTOPHAGY-RELATED 2, ISOFORM A"/>
    <property type="match status" value="1"/>
</dbReference>
<dbReference type="Pfam" id="PF13329">
    <property type="entry name" value="ATG2_CAD"/>
    <property type="match status" value="1"/>
</dbReference>
<accession>P0CM30</accession>
<accession>Q55X62</accession>
<accession>Q5KMS0</accession>